<name>INT13_HUMAN</name>
<proteinExistence type="evidence at protein level"/>
<gene>
    <name evidence="16 18" type="primary">INTS13</name>
    <name evidence="14 15" type="synonym">ASUN</name>
    <name type="synonym">C12orf11</name>
    <name type="synonym">GCT1</name>
</gene>
<reference key="1">
    <citation type="journal article" date="2004" name="Nat. Genet.">
        <title>Complete sequencing and characterization of 21,243 full-length human cDNAs.</title>
        <authorList>
            <person name="Ota T."/>
            <person name="Suzuki Y."/>
            <person name="Nishikawa T."/>
            <person name="Otsuki T."/>
            <person name="Sugiyama T."/>
            <person name="Irie R."/>
            <person name="Wakamatsu A."/>
            <person name="Hayashi K."/>
            <person name="Sato H."/>
            <person name="Nagai K."/>
            <person name="Kimura K."/>
            <person name="Makita H."/>
            <person name="Sekine M."/>
            <person name="Obayashi M."/>
            <person name="Nishi T."/>
            <person name="Shibahara T."/>
            <person name="Tanaka T."/>
            <person name="Ishii S."/>
            <person name="Yamamoto J."/>
            <person name="Saito K."/>
            <person name="Kawai Y."/>
            <person name="Isono Y."/>
            <person name="Nakamura Y."/>
            <person name="Nagahari K."/>
            <person name="Murakami K."/>
            <person name="Yasuda T."/>
            <person name="Iwayanagi T."/>
            <person name="Wagatsuma M."/>
            <person name="Shiratori A."/>
            <person name="Sudo H."/>
            <person name="Hosoiri T."/>
            <person name="Kaku Y."/>
            <person name="Kodaira H."/>
            <person name="Kondo H."/>
            <person name="Sugawara M."/>
            <person name="Takahashi M."/>
            <person name="Kanda K."/>
            <person name="Yokoi T."/>
            <person name="Furuya T."/>
            <person name="Kikkawa E."/>
            <person name="Omura Y."/>
            <person name="Abe K."/>
            <person name="Kamihara K."/>
            <person name="Katsuta N."/>
            <person name="Sato K."/>
            <person name="Tanikawa M."/>
            <person name="Yamazaki M."/>
            <person name="Ninomiya K."/>
            <person name="Ishibashi T."/>
            <person name="Yamashita H."/>
            <person name="Murakawa K."/>
            <person name="Fujimori K."/>
            <person name="Tanai H."/>
            <person name="Kimata M."/>
            <person name="Watanabe M."/>
            <person name="Hiraoka S."/>
            <person name="Chiba Y."/>
            <person name="Ishida S."/>
            <person name="Ono Y."/>
            <person name="Takiguchi S."/>
            <person name="Watanabe S."/>
            <person name="Yosida M."/>
            <person name="Hotuta T."/>
            <person name="Kusano J."/>
            <person name="Kanehori K."/>
            <person name="Takahashi-Fujii A."/>
            <person name="Hara H."/>
            <person name="Tanase T.-O."/>
            <person name="Nomura Y."/>
            <person name="Togiya S."/>
            <person name="Komai F."/>
            <person name="Hara R."/>
            <person name="Takeuchi K."/>
            <person name="Arita M."/>
            <person name="Imose N."/>
            <person name="Musashino K."/>
            <person name="Yuuki H."/>
            <person name="Oshima A."/>
            <person name="Sasaki N."/>
            <person name="Aotsuka S."/>
            <person name="Yoshikawa Y."/>
            <person name="Matsunawa H."/>
            <person name="Ichihara T."/>
            <person name="Shiohata N."/>
            <person name="Sano S."/>
            <person name="Moriya S."/>
            <person name="Momiyama H."/>
            <person name="Satoh N."/>
            <person name="Takami S."/>
            <person name="Terashima Y."/>
            <person name="Suzuki O."/>
            <person name="Nakagawa S."/>
            <person name="Senoh A."/>
            <person name="Mizoguchi H."/>
            <person name="Goto Y."/>
            <person name="Shimizu F."/>
            <person name="Wakebe H."/>
            <person name="Hishigaki H."/>
            <person name="Watanabe T."/>
            <person name="Sugiyama A."/>
            <person name="Takemoto M."/>
            <person name="Kawakami B."/>
            <person name="Yamazaki M."/>
            <person name="Watanabe K."/>
            <person name="Kumagai A."/>
            <person name="Itakura S."/>
            <person name="Fukuzumi Y."/>
            <person name="Fujimori Y."/>
            <person name="Komiyama M."/>
            <person name="Tashiro H."/>
            <person name="Tanigami A."/>
            <person name="Fujiwara T."/>
            <person name="Ono T."/>
            <person name="Yamada K."/>
            <person name="Fujii Y."/>
            <person name="Ozaki K."/>
            <person name="Hirao M."/>
            <person name="Ohmori Y."/>
            <person name="Kawabata A."/>
            <person name="Hikiji T."/>
            <person name="Kobatake N."/>
            <person name="Inagaki H."/>
            <person name="Ikema Y."/>
            <person name="Okamoto S."/>
            <person name="Okitani R."/>
            <person name="Kawakami T."/>
            <person name="Noguchi S."/>
            <person name="Itoh T."/>
            <person name="Shigeta K."/>
            <person name="Senba T."/>
            <person name="Matsumura K."/>
            <person name="Nakajima Y."/>
            <person name="Mizuno T."/>
            <person name="Morinaga M."/>
            <person name="Sasaki M."/>
            <person name="Togashi T."/>
            <person name="Oyama M."/>
            <person name="Hata H."/>
            <person name="Watanabe M."/>
            <person name="Komatsu T."/>
            <person name="Mizushima-Sugano J."/>
            <person name="Satoh T."/>
            <person name="Shirai Y."/>
            <person name="Takahashi Y."/>
            <person name="Nakagawa K."/>
            <person name="Okumura K."/>
            <person name="Nagase T."/>
            <person name="Nomura N."/>
            <person name="Kikuchi H."/>
            <person name="Masuho Y."/>
            <person name="Yamashita R."/>
            <person name="Nakai K."/>
            <person name="Yada T."/>
            <person name="Nakamura Y."/>
            <person name="Ohara O."/>
            <person name="Isogai T."/>
            <person name="Sugano S."/>
        </authorList>
    </citation>
    <scope>NUCLEOTIDE SEQUENCE [LARGE SCALE MRNA] (ISOFORMS 1 AND 2)</scope>
</reference>
<reference key="2">
    <citation type="journal article" date="2006" name="Nature">
        <title>The finished DNA sequence of human chromosome 12.</title>
        <authorList>
            <person name="Scherer S.E."/>
            <person name="Muzny D.M."/>
            <person name="Buhay C.J."/>
            <person name="Chen R."/>
            <person name="Cree A."/>
            <person name="Ding Y."/>
            <person name="Dugan-Rocha S."/>
            <person name="Gill R."/>
            <person name="Gunaratne P."/>
            <person name="Harris R.A."/>
            <person name="Hawes A.C."/>
            <person name="Hernandez J."/>
            <person name="Hodgson A.V."/>
            <person name="Hume J."/>
            <person name="Jackson A."/>
            <person name="Khan Z.M."/>
            <person name="Kovar-Smith C."/>
            <person name="Lewis L.R."/>
            <person name="Lozado R.J."/>
            <person name="Metzker M.L."/>
            <person name="Milosavljevic A."/>
            <person name="Miner G.R."/>
            <person name="Montgomery K.T."/>
            <person name="Morgan M.B."/>
            <person name="Nazareth L.V."/>
            <person name="Scott G."/>
            <person name="Sodergren E."/>
            <person name="Song X.-Z."/>
            <person name="Steffen D."/>
            <person name="Lovering R.C."/>
            <person name="Wheeler D.A."/>
            <person name="Worley K.C."/>
            <person name="Yuan Y."/>
            <person name="Zhang Z."/>
            <person name="Adams C.Q."/>
            <person name="Ansari-Lari M.A."/>
            <person name="Ayele M."/>
            <person name="Brown M.J."/>
            <person name="Chen G."/>
            <person name="Chen Z."/>
            <person name="Clerc-Blankenburg K.P."/>
            <person name="Davis C."/>
            <person name="Delgado O."/>
            <person name="Dinh H.H."/>
            <person name="Draper H."/>
            <person name="Gonzalez-Garay M.L."/>
            <person name="Havlak P."/>
            <person name="Jackson L.R."/>
            <person name="Jacob L.S."/>
            <person name="Kelly S.H."/>
            <person name="Li L."/>
            <person name="Li Z."/>
            <person name="Liu J."/>
            <person name="Liu W."/>
            <person name="Lu J."/>
            <person name="Maheshwari M."/>
            <person name="Nguyen B.-V."/>
            <person name="Okwuonu G.O."/>
            <person name="Pasternak S."/>
            <person name="Perez L.M."/>
            <person name="Plopper F.J.H."/>
            <person name="Santibanez J."/>
            <person name="Shen H."/>
            <person name="Tabor P.E."/>
            <person name="Verduzco D."/>
            <person name="Waldron L."/>
            <person name="Wang Q."/>
            <person name="Williams G.A."/>
            <person name="Zhang J."/>
            <person name="Zhou J."/>
            <person name="Allen C.C."/>
            <person name="Amin A.G."/>
            <person name="Anyalebechi V."/>
            <person name="Bailey M."/>
            <person name="Barbaria J.A."/>
            <person name="Bimage K.E."/>
            <person name="Bryant N.P."/>
            <person name="Burch P.E."/>
            <person name="Burkett C.E."/>
            <person name="Burrell K.L."/>
            <person name="Calderon E."/>
            <person name="Cardenas V."/>
            <person name="Carter K."/>
            <person name="Casias K."/>
            <person name="Cavazos I."/>
            <person name="Cavazos S.R."/>
            <person name="Ceasar H."/>
            <person name="Chacko J."/>
            <person name="Chan S.N."/>
            <person name="Chavez D."/>
            <person name="Christopoulos C."/>
            <person name="Chu J."/>
            <person name="Cockrell R."/>
            <person name="Cox C.D."/>
            <person name="Dang M."/>
            <person name="Dathorne S.R."/>
            <person name="David R."/>
            <person name="Davis C.M."/>
            <person name="Davy-Carroll L."/>
            <person name="Deshazo D.R."/>
            <person name="Donlin J.E."/>
            <person name="D'Souza L."/>
            <person name="Eaves K.A."/>
            <person name="Egan A."/>
            <person name="Emery-Cohen A.J."/>
            <person name="Escotto M."/>
            <person name="Flagg N."/>
            <person name="Forbes L.D."/>
            <person name="Gabisi A.M."/>
            <person name="Garza M."/>
            <person name="Hamilton C."/>
            <person name="Henderson N."/>
            <person name="Hernandez O."/>
            <person name="Hines S."/>
            <person name="Hogues M.E."/>
            <person name="Huang M."/>
            <person name="Idlebird D.G."/>
            <person name="Johnson R."/>
            <person name="Jolivet A."/>
            <person name="Jones S."/>
            <person name="Kagan R."/>
            <person name="King L.M."/>
            <person name="Leal B."/>
            <person name="Lebow H."/>
            <person name="Lee S."/>
            <person name="LeVan J.M."/>
            <person name="Lewis L.C."/>
            <person name="London P."/>
            <person name="Lorensuhewa L.M."/>
            <person name="Loulseged H."/>
            <person name="Lovett D.A."/>
            <person name="Lucier A."/>
            <person name="Lucier R.L."/>
            <person name="Ma J."/>
            <person name="Madu R.C."/>
            <person name="Mapua P."/>
            <person name="Martindale A.D."/>
            <person name="Martinez E."/>
            <person name="Massey E."/>
            <person name="Mawhiney S."/>
            <person name="Meador M.G."/>
            <person name="Mendez S."/>
            <person name="Mercado C."/>
            <person name="Mercado I.C."/>
            <person name="Merritt C.E."/>
            <person name="Miner Z.L."/>
            <person name="Minja E."/>
            <person name="Mitchell T."/>
            <person name="Mohabbat F."/>
            <person name="Mohabbat K."/>
            <person name="Montgomery B."/>
            <person name="Moore N."/>
            <person name="Morris S."/>
            <person name="Munidasa M."/>
            <person name="Ngo R.N."/>
            <person name="Nguyen N.B."/>
            <person name="Nickerson E."/>
            <person name="Nwaokelemeh O.O."/>
            <person name="Nwokenkwo S."/>
            <person name="Obregon M."/>
            <person name="Oguh M."/>
            <person name="Oragunye N."/>
            <person name="Oviedo R.J."/>
            <person name="Parish B.J."/>
            <person name="Parker D.N."/>
            <person name="Parrish J."/>
            <person name="Parks K.L."/>
            <person name="Paul H.A."/>
            <person name="Payton B.A."/>
            <person name="Perez A."/>
            <person name="Perrin W."/>
            <person name="Pickens A."/>
            <person name="Primus E.L."/>
            <person name="Pu L.-L."/>
            <person name="Puazo M."/>
            <person name="Quiles M.M."/>
            <person name="Quiroz J.B."/>
            <person name="Rabata D."/>
            <person name="Reeves K."/>
            <person name="Ruiz S.J."/>
            <person name="Shao H."/>
            <person name="Sisson I."/>
            <person name="Sonaike T."/>
            <person name="Sorelle R.P."/>
            <person name="Sutton A.E."/>
            <person name="Svatek A.F."/>
            <person name="Svetz L.A."/>
            <person name="Tamerisa K.S."/>
            <person name="Taylor T.R."/>
            <person name="Teague B."/>
            <person name="Thomas N."/>
            <person name="Thorn R.D."/>
            <person name="Trejos Z.Y."/>
            <person name="Trevino B.K."/>
            <person name="Ukegbu O.N."/>
            <person name="Urban J.B."/>
            <person name="Vasquez L.I."/>
            <person name="Vera V.A."/>
            <person name="Villasana D.M."/>
            <person name="Wang L."/>
            <person name="Ward-Moore S."/>
            <person name="Warren J.T."/>
            <person name="Wei X."/>
            <person name="White F."/>
            <person name="Williamson A.L."/>
            <person name="Wleczyk R."/>
            <person name="Wooden H.S."/>
            <person name="Wooden S.H."/>
            <person name="Yen J."/>
            <person name="Yoon L."/>
            <person name="Yoon V."/>
            <person name="Zorrilla S.E."/>
            <person name="Nelson D."/>
            <person name="Kucherlapati R."/>
            <person name="Weinstock G."/>
            <person name="Gibbs R.A."/>
        </authorList>
    </citation>
    <scope>NUCLEOTIDE SEQUENCE [LARGE SCALE GENOMIC DNA]</scope>
</reference>
<reference key="3">
    <citation type="journal article" date="2004" name="Genome Res.">
        <title>The status, quality, and expansion of the NIH full-length cDNA project: the Mammalian Gene Collection (MGC).</title>
        <authorList>
            <consortium name="The MGC Project Team"/>
        </authorList>
    </citation>
    <scope>NUCLEOTIDE SEQUENCE [LARGE SCALE MRNA] (ISOFORM 1)</scope>
    <source>
        <tissue>Eye</tissue>
        <tissue>Lymph</tissue>
    </source>
</reference>
<reference key="4">
    <citation type="journal article" date="2003" name="Proc. Natl. Acad. Sci. U.S.A.">
        <title>Immunomic analysis of human sarcoma.</title>
        <authorList>
            <person name="Lee S.-Y."/>
            <person name="Obata Y."/>
            <person name="Yoshida M."/>
            <person name="Stockert E."/>
            <person name="Williamson B."/>
            <person name="Jungbluth A.A."/>
            <person name="Chen Y.-T."/>
            <person name="Old L.J."/>
            <person name="Scanlan M.J."/>
        </authorList>
    </citation>
    <scope>NUCLEOTIDE SEQUENCE [MRNA] OF 269-513 (ISOFORM 1)</scope>
</reference>
<reference key="5">
    <citation type="journal article" date="2007" name="BMC Genomics">
        <title>The full-ORF clone resource of the German cDNA consortium.</title>
        <authorList>
            <person name="Bechtel S."/>
            <person name="Rosenfelder H."/>
            <person name="Duda A."/>
            <person name="Schmidt C.P."/>
            <person name="Ernst U."/>
            <person name="Wellenreuther R."/>
            <person name="Mehrle A."/>
            <person name="Schuster C."/>
            <person name="Bahr A."/>
            <person name="Bloecker H."/>
            <person name="Heubner D."/>
            <person name="Hoerlein A."/>
            <person name="Michel G."/>
            <person name="Wedler H."/>
            <person name="Koehrer K."/>
            <person name="Ottenwaelder B."/>
            <person name="Poustka A."/>
            <person name="Wiemann S."/>
            <person name="Schupp I."/>
        </authorList>
    </citation>
    <scope>NUCLEOTIDE SEQUENCE [LARGE SCALE MRNA] OF 568-706 (ISOFORM 1)</scope>
    <source>
        <tissue>Testis</tissue>
    </source>
</reference>
<reference key="6">
    <citation type="journal article" date="2002" name="Cancer Res.">
        <title>Genomic and expression analysis of the 12p11-p12 amplicon using EST arrays identifies two novel amplified and overexpressed genes.</title>
        <authorList>
            <person name="Bourdon V."/>
            <person name="Naef F."/>
            <person name="Rao P.H."/>
            <person name="Reuter V."/>
            <person name="Mok S.C."/>
            <person name="Bosl G.J."/>
            <person name="Koul S."/>
            <person name="Murty V.V."/>
            <person name="Kucherlapati R.S."/>
            <person name="Chaganti R.S."/>
        </authorList>
    </citation>
    <scope>TISSUE SPECIFICITY</scope>
</reference>
<reference key="7">
    <citation type="journal article" date="2005" name="Dev. Cell">
        <title>Drosophila genome-scale screen for PAN GU kinase substrates identifies Mat89Bb as a cell cycle regulator.</title>
        <authorList>
            <person name="Lee L.A."/>
            <person name="Lee E."/>
            <person name="Anderson M.A."/>
            <person name="Vardy L."/>
            <person name="Tahinci E."/>
            <person name="Ali S.M."/>
            <person name="Kashevsky H."/>
            <person name="Benasutti M."/>
            <person name="Kirschner M.W."/>
            <person name="Orr-Weaver T.L."/>
        </authorList>
    </citation>
    <scope>FUNCTION</scope>
</reference>
<reference key="8">
    <citation type="journal article" date="2006" name="Cell">
        <title>Global, in vivo, and site-specific phosphorylation dynamics in signaling networks.</title>
        <authorList>
            <person name="Olsen J.V."/>
            <person name="Blagoev B."/>
            <person name="Gnad F."/>
            <person name="Macek B."/>
            <person name="Kumar C."/>
            <person name="Mortensen P."/>
            <person name="Mann M."/>
        </authorList>
    </citation>
    <scope>PHOSPHORYLATION [LARGE SCALE ANALYSIS] AT SER-626</scope>
    <scope>IDENTIFICATION BY MASS SPECTROMETRY [LARGE SCALE ANALYSIS]</scope>
    <source>
        <tissue>Cervix carcinoma</tissue>
    </source>
</reference>
<reference key="9">
    <citation type="journal article" date="2008" name="Proc. Natl. Acad. Sci. U.S.A.">
        <title>A quantitative atlas of mitotic phosphorylation.</title>
        <authorList>
            <person name="Dephoure N."/>
            <person name="Zhou C."/>
            <person name="Villen J."/>
            <person name="Beausoleil S.A."/>
            <person name="Bakalarski C.E."/>
            <person name="Elledge S.J."/>
            <person name="Gygi S.P."/>
        </authorList>
    </citation>
    <scope>PHOSPHORYLATION [LARGE SCALE ANALYSIS] AT SER-626</scope>
    <scope>IDENTIFICATION BY MASS SPECTROMETRY [LARGE SCALE ANALYSIS]</scope>
    <source>
        <tissue>Cervix carcinoma</tissue>
    </source>
</reference>
<reference key="10">
    <citation type="journal article" date="2010" name="Sci. Signal.">
        <title>Quantitative phosphoproteomics reveals widespread full phosphorylation site occupancy during mitosis.</title>
        <authorList>
            <person name="Olsen J.V."/>
            <person name="Vermeulen M."/>
            <person name="Santamaria A."/>
            <person name="Kumar C."/>
            <person name="Miller M.L."/>
            <person name="Jensen L.J."/>
            <person name="Gnad F."/>
            <person name="Cox J."/>
            <person name="Jensen T.S."/>
            <person name="Nigg E.A."/>
            <person name="Brunak S."/>
            <person name="Mann M."/>
        </authorList>
    </citation>
    <scope>PHOSPHORYLATION [LARGE SCALE ANALYSIS] AT SER-626</scope>
    <scope>IDENTIFICATION BY MASS SPECTROMETRY [LARGE SCALE ANALYSIS]</scope>
    <source>
        <tissue>Cervix carcinoma</tissue>
    </source>
</reference>
<reference key="11">
    <citation type="journal article" date="2011" name="BMC Syst. Biol.">
        <title>Initial characterization of the human central proteome.</title>
        <authorList>
            <person name="Burkard T.R."/>
            <person name="Planyavsky M."/>
            <person name="Kaupe I."/>
            <person name="Breitwieser F.P."/>
            <person name="Buerckstuemmer T."/>
            <person name="Bennett K.L."/>
            <person name="Superti-Furga G."/>
            <person name="Colinge J."/>
        </authorList>
    </citation>
    <scope>IDENTIFICATION BY MASS SPECTROMETRY [LARGE SCALE ANALYSIS]</scope>
</reference>
<reference key="12">
    <citation type="journal article" date="2011" name="Sci. Signal.">
        <title>System-wide temporal characterization of the proteome and phosphoproteome of human embryonic stem cell differentiation.</title>
        <authorList>
            <person name="Rigbolt K.T."/>
            <person name="Prokhorova T.A."/>
            <person name="Akimov V."/>
            <person name="Henningsen J."/>
            <person name="Johansen P.T."/>
            <person name="Kratchmarova I."/>
            <person name="Kassem M."/>
            <person name="Mann M."/>
            <person name="Olsen J.V."/>
            <person name="Blagoev B."/>
        </authorList>
    </citation>
    <scope>IDENTIFICATION BY MASS SPECTROMETRY [LARGE SCALE ANALYSIS]</scope>
</reference>
<reference key="13">
    <citation type="journal article" date="2012" name="Mol. Biol. Cell">
        <title>Human Asunder promotes dynein recruitment and centrosomal tethering to the nucleus at mitotic entry.</title>
        <authorList>
            <person name="Jodoin J.N."/>
            <person name="Shboul M."/>
            <person name="Sitaram P."/>
            <person name="Zein-Sabatto H."/>
            <person name="Reversade B."/>
            <person name="Lee E."/>
            <person name="Lee L.A."/>
        </authorList>
    </citation>
    <scope>FUNCTION</scope>
    <scope>INTERACTION WITH PAFAH1B1</scope>
    <scope>SUBCELLULAR LOCATION</scope>
</reference>
<reference key="14">
    <citation type="journal article" date="2013" name="J. Proteome Res.">
        <title>Toward a comprehensive characterization of a human cancer cell phosphoproteome.</title>
        <authorList>
            <person name="Zhou H."/>
            <person name="Di Palma S."/>
            <person name="Preisinger C."/>
            <person name="Peng M."/>
            <person name="Polat A.N."/>
            <person name="Heck A.J."/>
            <person name="Mohammed S."/>
        </authorList>
    </citation>
    <scope>PHOSPHORYLATION [LARGE SCALE ANALYSIS] AT SER-623 AND SER-626</scope>
    <scope>IDENTIFICATION BY MASS SPECTROMETRY [LARGE SCALE ANALYSIS]</scope>
    <source>
        <tissue>Cervix carcinoma</tissue>
        <tissue>Erythroleukemia</tissue>
    </source>
</reference>
<reference key="15">
    <citation type="journal article" date="2013" name="Mol. Biol. Cell">
        <title>Nuclear-localized Asunder regulates cytoplasmic dynein localization via its role in the integrator complex.</title>
        <authorList>
            <person name="Jodoin J.N."/>
            <person name="Sitaram P."/>
            <person name="Albrecht T.R."/>
            <person name="May S.B."/>
            <person name="Shboul M."/>
            <person name="Lee E."/>
            <person name="Reversade B."/>
            <person name="Wagner E.J."/>
            <person name="Lee L.A."/>
        </authorList>
    </citation>
    <scope>IDENTIFICATION IN THE INTEGRATOR COMPLEX</scope>
    <scope>SUBCELLULAR LOCATION</scope>
    <scope>MUTAGENESIS OF 577-ARG--ASP-582</scope>
    <scope>DOMAIN</scope>
</reference>
<reference key="16">
    <citation type="journal article" date="2014" name="J. Proteomics">
        <title>An enzyme assisted RP-RPLC approach for in-depth analysis of human liver phosphoproteome.</title>
        <authorList>
            <person name="Bian Y."/>
            <person name="Song C."/>
            <person name="Cheng K."/>
            <person name="Dong M."/>
            <person name="Wang F."/>
            <person name="Huang J."/>
            <person name="Sun D."/>
            <person name="Wang L."/>
            <person name="Ye M."/>
            <person name="Zou H."/>
        </authorList>
    </citation>
    <scope>PHOSPHORYLATION [LARGE SCALE ANALYSIS] AT SER-626</scope>
    <scope>IDENTIFICATION BY MASS SPECTROMETRY [LARGE SCALE ANALYSIS]</scope>
    <source>
        <tissue>Liver</tissue>
    </source>
</reference>
<reference key="17">
    <citation type="journal article" date="2017" name="Nat. Struct. Mol. Biol.">
        <title>Site-specific mapping of the human SUMO proteome reveals co-modification with phosphorylation.</title>
        <authorList>
            <person name="Hendriks I.A."/>
            <person name="Lyon D."/>
            <person name="Young C."/>
            <person name="Jensen L.J."/>
            <person name="Vertegaal A.C."/>
            <person name="Nielsen M.L."/>
        </authorList>
    </citation>
    <scope>SUMOYLATION [LARGE SCALE ANALYSIS] AT LYS-611</scope>
    <scope>IDENTIFICATION BY MASS SPECTROMETRY [LARGE SCALE ANALYSIS]</scope>
</reference>
<reference key="18">
    <citation type="journal article" date="2024" name="Mol. Cell">
        <title>Cytoplasmic binding partners of the Integrator endonuclease INTS11 and its paralog CPSF73 are required for their nuclear function.</title>
        <authorList>
            <person name="Lin M.H."/>
            <person name="Jensen M.K."/>
            <person name="Elrod N.D."/>
            <person name="Chu H.F."/>
            <person name="Haseley M."/>
            <person name="Beam A.C."/>
            <person name="Huang K.L."/>
            <person name="Chiang W."/>
            <person name="Russell W.K."/>
            <person name="Williams K."/>
            <person name="Proschel C."/>
            <person name="Wagner E.J."/>
            <person name="Tong L."/>
        </authorList>
    </citation>
    <scope>IDENTIFICATION IN THE INTEGRATOR COMPLEX</scope>
    <scope>SUBCELLULAR LOCATION</scope>
</reference>
<reference evidence="19" key="19">
    <citation type="journal article" date="2020" name="Nat. Commun.">
        <title>INTS10-INTS13-INTS14 form a functional module of Integrator that binds nucleic acids and the cleavage module.</title>
        <authorList>
            <person name="Sabath K."/>
            <person name="Staeubli M.L."/>
            <person name="Marti S."/>
            <person name="Leitner A."/>
            <person name="Moes M."/>
            <person name="Jonas S."/>
        </authorList>
    </citation>
    <scope>X-RAY CRYSTALLOGRAPHY (2.54 ANGSTROMS) IN COMPLEX WITH INTS14</scope>
    <scope>FUNCTION</scope>
    <scope>IDENTIFICATION IN THE INTEGRATOR COMPLEX</scope>
</reference>
<reference evidence="20 21" key="20">
    <citation type="journal article" date="2024" name="Mol. Cell">
        <title>Basis of gene-specific transcription regulation by the Integrator complex.</title>
        <authorList>
            <person name="Sabath K."/>
            <person name="Nabih A."/>
            <person name="Arnold C."/>
            <person name="Moussa R."/>
            <person name="Domjan D."/>
            <person name="Zaugg J.B."/>
            <person name="Jonas S."/>
        </authorList>
    </citation>
    <scope>X-RAY CRYSTALLOGRAPHY (2.50 ANGSTROMS) IN COMPLEX WITH INTS14 AND ZNF609</scope>
    <scope>FUNCTION</scope>
    <scope>IDENTIFICATION IN THE INTEGRATOR COMPLEX</scope>
    <scope>INTERACTION WITH ZNF609 AND ZNF655</scope>
    <scope>DOMAIN</scope>
    <scope>PHOSPHORYLATION AT SER-678</scope>
    <scope>MUTAGENESIS OF 123-LEU--VAL-127; 174-MET--CYS-178 AND 345-ARG--PHE-353</scope>
</reference>
<reference evidence="25 26 27 28" key="21">
    <citation type="journal article" date="2024" name="Mol. Cell">
        <title>Structural basis of the Integrator complex assembly and association with transcription factors.</title>
        <authorList>
            <person name="Razew M."/>
            <person name="Fraudeau A."/>
            <person name="Pfleiderer M.M."/>
            <person name="Linares R."/>
            <person name="Galej W.P."/>
        </authorList>
    </citation>
    <scope>STRUCTURE BY ELECTRON MICROSCOPY (3.30 ANGSTROMS) IN COMPLEX WITH INTS10; INTS14 AND INTS15</scope>
    <scope>FUNCTION</scope>
    <scope>IDENTIFICATION IN THE INTEGRATOR COMPLEX</scope>
    <scope>INTERACTION WITH ZNF655</scope>
</reference>
<reference evidence="22 23 24" key="22">
    <citation type="journal article" date="2024" name="Nature">
        <title>Structural basis of Integrator-dependent RNA polymerase II termination.</title>
        <authorList>
            <person name="Fianu I."/>
            <person name="Ochmann M."/>
            <person name="Walshe J.L."/>
            <person name="Dybkov O."/>
            <person name="Cruz J.N."/>
            <person name="Urlaub H."/>
            <person name="Cramer P."/>
        </authorList>
    </citation>
    <scope>STRUCTURE BY ELECTRON MICROSCOPY (3.10 ANGSTROMS) OF INTAC COMPLEX</scope>
    <scope>FUNCTION</scope>
    <scope>IDENTIFICATION IN THE INTAC COMPLEX</scope>
</reference>
<reference key="23">
    <citation type="journal article" date="2006" name="Science">
        <title>The consensus coding sequences of human breast and colorectal cancers.</title>
        <authorList>
            <person name="Sjoeblom T."/>
            <person name="Jones S."/>
            <person name="Wood L.D."/>
            <person name="Parsons D.W."/>
            <person name="Lin J."/>
            <person name="Barber T.D."/>
            <person name="Mandelker D."/>
            <person name="Leary R.J."/>
            <person name="Ptak J."/>
            <person name="Silliman N."/>
            <person name="Szabo S."/>
            <person name="Buckhaults P."/>
            <person name="Farrell C."/>
            <person name="Meeh P."/>
            <person name="Markowitz S.D."/>
            <person name="Willis J."/>
            <person name="Dawson D."/>
            <person name="Willson J.K.V."/>
            <person name="Gazdar A.F."/>
            <person name="Hartigan J."/>
            <person name="Wu L."/>
            <person name="Liu C."/>
            <person name="Parmigiani G."/>
            <person name="Park B.H."/>
            <person name="Bachman K.E."/>
            <person name="Papadopoulos N."/>
            <person name="Vogelstein B."/>
            <person name="Kinzler K.W."/>
            <person name="Velculescu V.E."/>
        </authorList>
    </citation>
    <scope>VARIANT [LARGE SCALE ANALYSIS] PRO-227</scope>
</reference>
<sequence>MKIFSESHKTVFVVDHCPYMAESCRQHVEFDMLVKNRTQGIIPLAPISKSLWTCSVESSMEYCRIMYDIFPFKKLVNFIVSDSGAHVLNSWTQEDQNLQELMAALAAVGPPNPRADPECCSILHGLVAAVETLCKITEYQHEARTLLMENAERVGNRGRIICITNAKSDSHVRMLEDCVQETIHEHNKLAANSDHLMQIQKCELVLIHTYPVGEDSLVSDRSKKELSPVLTSEVHSVRAGRHLATKLNILVQQHFDLASTTITNIPMKEEQHANTSANYDVELLHHKDAHVDFLKSGDSHLGGGSREGSFKETITLKWCTPRTNNIELHYCTGAYRISPVDVNSRPSSCLTNFLLNGRSVLLEQPRKSGSKVISHMLSSHGGEIFLHVLSSSRSILEDPPSISEGCGGRVTDYRITDFGEFMRENRLTPFLDPRYKIDGSLEVPLERAKDQLEKHTRYWPMIISQTTIFNMQAVVPLASVIVKESLTEEDVLNCQKTIYNLVDMERKNDPLPISTVGTRGKGPKRDEQYRIMWNELETLVRAHINNSEKHQRVLECLMACRSKPPEEEERKKRGRKREDKEDKSEKAVKDYEQEKSWQDSERLKGILERGKEELAEAEIIKDSPDSPEPPNKKPLVEMDETPQVEKSKGPVSLLSLWSNRINTANSRKHQEFAGRLNSVNNRAELYQHLKEENGMETTENGKASRQ</sequence>
<feature type="chain" id="PRO_0000089845" description="Integrator complex subunit 13">
    <location>
        <begin position="1"/>
        <end position="706"/>
    </location>
</feature>
<feature type="region of interest" description="Disordered" evidence="2">
    <location>
        <begin position="564"/>
        <end position="603"/>
    </location>
</feature>
<feature type="region of interest" description="Disordered" evidence="2">
    <location>
        <begin position="615"/>
        <end position="650"/>
    </location>
</feature>
<feature type="region of interest" description="Cleavage module binding motif (CMBM)" evidence="11">
    <location>
        <begin position="649"/>
        <end position="694"/>
    </location>
</feature>
<feature type="coiled-coil region" evidence="1">
    <location>
        <begin position="567"/>
        <end position="622"/>
    </location>
</feature>
<feature type="short sequence motif" description="Nuclear localization signal (NLS)" evidence="7">
    <location>
        <begin position="572"/>
        <end position="582"/>
    </location>
</feature>
<feature type="compositionally biased region" description="Basic and acidic residues" evidence="2">
    <location>
        <begin position="615"/>
        <end position="636"/>
    </location>
</feature>
<feature type="modified residue" description="Phosphoserine" evidence="32">
    <location>
        <position position="623"/>
    </location>
</feature>
<feature type="modified residue" description="Phosphoserine" evidence="29 30 31 32 33">
    <location>
        <position position="626"/>
    </location>
</feature>
<feature type="modified residue" description="Phosphoserine" evidence="11">
    <location>
        <position position="678"/>
    </location>
</feature>
<feature type="cross-link" description="Glycyl lysine isopeptide (Lys-Gly) (interchain with G-Cter in SUMO2)" evidence="34">
    <location>
        <position position="611"/>
    </location>
</feature>
<feature type="splice variant" id="VSP_056514" description="In isoform 2." evidence="13">
    <location>
        <begin position="1"/>
        <end position="101"/>
    </location>
</feature>
<feature type="sequence variant" id="VAR_050864" description="In dbSNP:rs2306852.">
    <original>M</original>
    <variation>T</variation>
    <location>
        <position position="66"/>
    </location>
</feature>
<feature type="sequence variant" id="VAR_035673" description="In a colorectal cancer sample; somatic mutation." evidence="4">
    <original>S</original>
    <variation>P</variation>
    <location>
        <position position="227"/>
    </location>
</feature>
<feature type="mutagenesis site" description="Abolished interaction with transcription factor ZNF655." evidence="11">
    <original>LHGLV</original>
    <variation>RHGLE</variation>
    <location>
        <begin position="123"/>
        <end position="127"/>
    </location>
</feature>
<feature type="mutagenesis site" description="Abolished interaction with transcription factor ZNF655." evidence="11">
    <original>MLEDC</original>
    <variation>RLEDR</variation>
    <location>
        <begin position="174"/>
        <end position="178"/>
    </location>
</feature>
<feature type="mutagenesis site" description="Abolished interaction with transcription factors." evidence="11">
    <original>RPSSCLTNF</original>
    <variation>APSSCLTNA</variation>
    <location>
        <begin position="345"/>
        <end position="353"/>
    </location>
</feature>
<feature type="mutagenesis site" description="Loss of nuclear location. Location is mainly cytoplasmic or diffuse. Loss of Dynein recruitment to nuclear envelope." evidence="7">
    <original>REDKED</original>
    <variation>AAAAAA</variation>
    <location>
        <begin position="577"/>
        <end position="582"/>
    </location>
</feature>
<feature type="sequence conflict" description="In Ref. 1; BAA91725." evidence="17" ref="1">
    <original>E</original>
    <variation>G</variation>
    <location>
        <position position="29"/>
    </location>
</feature>
<feature type="sequence conflict" description="In Ref. 1; BAA91725." evidence="17" ref="1">
    <original>T</original>
    <variation>P</variation>
    <location>
        <position position="53"/>
    </location>
</feature>
<feature type="sequence conflict" description="In Ref. 1; BAA91725." evidence="17" ref="1">
    <original>L</original>
    <variation>P</variation>
    <location>
        <position position="75"/>
    </location>
</feature>
<feature type="sequence conflict" description="In Ref. 1; BAA91721." evidence="17" ref="1">
    <original>K</original>
    <variation>R</variation>
    <location>
        <position position="454"/>
    </location>
</feature>
<feature type="sequence conflict" description="In Ref. 1; BAA91721." evidence="17" ref="1">
    <original>R</original>
    <variation>P</variation>
    <location>
        <position position="457"/>
    </location>
</feature>
<feature type="sequence conflict" description="In Ref. 1; BAA91725." evidence="17" ref="1">
    <original>W</original>
    <variation>R</variation>
    <location>
        <position position="459"/>
    </location>
</feature>
<feature type="sequence conflict" description="In Ref. 4; AAO65180." evidence="17" ref="4">
    <original>E</original>
    <variation>K</variation>
    <location>
        <position position="484"/>
    </location>
</feature>
<feature type="sequence conflict" description="In Ref. 4; AAO65180." evidence="17" ref="4">
    <original>D</original>
    <variation>N</variation>
    <location>
        <position position="490"/>
    </location>
</feature>
<feature type="sequence conflict" description="In Ref. 3; AAH03081." evidence="17" ref="3">
    <original>E</original>
    <variation>K</variation>
    <location>
        <position position="699"/>
    </location>
</feature>
<feature type="strand" evidence="35">
    <location>
        <begin position="2"/>
        <end position="5"/>
    </location>
</feature>
<feature type="helix" evidence="35">
    <location>
        <begin position="6"/>
        <end position="8"/>
    </location>
</feature>
<feature type="strand" evidence="36">
    <location>
        <begin position="9"/>
        <end position="15"/>
    </location>
</feature>
<feature type="helix" evidence="36">
    <location>
        <begin position="18"/>
        <end position="21"/>
    </location>
</feature>
<feature type="strand" evidence="35">
    <location>
        <begin position="22"/>
        <end position="28"/>
    </location>
</feature>
<feature type="strand" evidence="35">
    <location>
        <begin position="47"/>
        <end position="50"/>
    </location>
</feature>
<feature type="helix" evidence="36">
    <location>
        <begin position="51"/>
        <end position="69"/>
    </location>
</feature>
<feature type="strand" evidence="36">
    <location>
        <begin position="71"/>
        <end position="73"/>
    </location>
</feature>
<feature type="strand" evidence="36">
    <location>
        <begin position="75"/>
        <end position="87"/>
    </location>
</feature>
<feature type="strand" evidence="36">
    <location>
        <begin position="91"/>
        <end position="93"/>
    </location>
</feature>
<feature type="helix" evidence="37">
    <location>
        <begin position="94"/>
        <end position="96"/>
    </location>
</feature>
<feature type="helix" evidence="36">
    <location>
        <begin position="98"/>
        <end position="108"/>
    </location>
</feature>
<feature type="strand" evidence="38">
    <location>
        <begin position="113"/>
        <end position="115"/>
    </location>
</feature>
<feature type="helix" evidence="36">
    <location>
        <begin position="123"/>
        <end position="132"/>
    </location>
</feature>
<feature type="helix" evidence="36">
    <location>
        <begin position="138"/>
        <end position="147"/>
    </location>
</feature>
<feature type="strand" evidence="36">
    <location>
        <begin position="157"/>
        <end position="164"/>
    </location>
</feature>
<feature type="helix" evidence="36">
    <location>
        <begin position="169"/>
        <end position="191"/>
    </location>
</feature>
<feature type="strand" evidence="36">
    <location>
        <begin position="194"/>
        <end position="196"/>
    </location>
</feature>
<feature type="strand" evidence="36">
    <location>
        <begin position="200"/>
        <end position="210"/>
    </location>
</feature>
<feature type="strand" evidence="36">
    <location>
        <begin position="221"/>
        <end position="225"/>
    </location>
</feature>
<feature type="strand" evidence="36">
    <location>
        <begin position="227"/>
        <end position="238"/>
    </location>
</feature>
<feature type="helix" evidence="36">
    <location>
        <begin position="241"/>
        <end position="255"/>
    </location>
</feature>
<feature type="strand" evidence="36">
    <location>
        <begin position="257"/>
        <end position="269"/>
    </location>
</feature>
<feature type="strand" evidence="36">
    <location>
        <begin position="277"/>
        <end position="286"/>
    </location>
</feature>
<feature type="helix" evidence="36">
    <location>
        <begin position="287"/>
        <end position="290"/>
    </location>
</feature>
<feature type="turn" evidence="35">
    <location>
        <begin position="291"/>
        <end position="293"/>
    </location>
</feature>
<feature type="strand" evidence="36">
    <location>
        <begin position="313"/>
        <end position="318"/>
    </location>
</feature>
<feature type="strand" evidence="38">
    <location>
        <begin position="323"/>
        <end position="325"/>
    </location>
</feature>
<feature type="strand" evidence="36">
    <location>
        <begin position="331"/>
        <end position="339"/>
    </location>
</feature>
<feature type="turn" evidence="36">
    <location>
        <begin position="340"/>
        <end position="343"/>
    </location>
</feature>
<feature type="helix" evidence="36">
    <location>
        <begin position="345"/>
        <end position="355"/>
    </location>
</feature>
<feature type="strand" evidence="36">
    <location>
        <begin position="359"/>
        <end position="363"/>
    </location>
</feature>
<feature type="strand" evidence="36">
    <location>
        <begin position="373"/>
        <end position="380"/>
    </location>
</feature>
<feature type="strand" evidence="36">
    <location>
        <begin position="383"/>
        <end position="389"/>
    </location>
</feature>
<feature type="helix" evidence="36">
    <location>
        <begin position="402"/>
        <end position="404"/>
    </location>
</feature>
<feature type="turn" evidence="36">
    <location>
        <begin position="406"/>
        <end position="409"/>
    </location>
</feature>
<feature type="helix" evidence="36">
    <location>
        <begin position="415"/>
        <end position="424"/>
    </location>
</feature>
<feature type="strand" evidence="36">
    <location>
        <begin position="426"/>
        <end position="429"/>
    </location>
</feature>
<feature type="strand" evidence="36">
    <location>
        <begin position="431"/>
        <end position="433"/>
    </location>
</feature>
<feature type="strand" evidence="36">
    <location>
        <begin position="435"/>
        <end position="442"/>
    </location>
</feature>
<feature type="helix" evidence="36">
    <location>
        <begin position="444"/>
        <end position="455"/>
    </location>
</feature>
<feature type="helix" evidence="36">
    <location>
        <begin position="463"/>
        <end position="465"/>
    </location>
</feature>
<feature type="helix" evidence="36">
    <location>
        <begin position="468"/>
        <end position="470"/>
    </location>
</feature>
<feature type="helix" evidence="36">
    <location>
        <begin position="472"/>
        <end position="474"/>
    </location>
</feature>
<feature type="helix" evidence="36">
    <location>
        <begin position="475"/>
        <end position="481"/>
    </location>
</feature>
<feature type="strand" evidence="36">
    <location>
        <begin position="483"/>
        <end position="485"/>
    </location>
</feature>
<feature type="helix" evidence="36">
    <location>
        <begin position="488"/>
        <end position="507"/>
    </location>
</feature>
<feature type="helix" evidence="36">
    <location>
        <begin position="525"/>
        <end position="541"/>
    </location>
</feature>
<feature type="turn" evidence="36">
    <location>
        <begin position="542"/>
        <end position="545"/>
    </location>
</feature>
<feature type="helix" evidence="36">
    <location>
        <begin position="548"/>
        <end position="560"/>
    </location>
</feature>
<feature type="helix" evidence="37">
    <location>
        <begin position="656"/>
        <end position="666"/>
    </location>
</feature>
<feature type="helix" evidence="37">
    <location>
        <begin position="673"/>
        <end position="676"/>
    </location>
</feature>
<organism>
    <name type="scientific">Homo sapiens</name>
    <name type="common">Human</name>
    <dbReference type="NCBI Taxonomy" id="9606"/>
    <lineage>
        <taxon>Eukaryota</taxon>
        <taxon>Metazoa</taxon>
        <taxon>Chordata</taxon>
        <taxon>Craniata</taxon>
        <taxon>Vertebrata</taxon>
        <taxon>Euteleostomi</taxon>
        <taxon>Mammalia</taxon>
        <taxon>Eutheria</taxon>
        <taxon>Euarchontoglires</taxon>
        <taxon>Primates</taxon>
        <taxon>Haplorrhini</taxon>
        <taxon>Catarrhini</taxon>
        <taxon>Hominidae</taxon>
        <taxon>Homo</taxon>
    </lineage>
</organism>
<accession>Q9NVM9</accession>
<accession>B4DNK1</accession>
<accession>Q86WE2</accession>
<accession>Q96HM2</accession>
<accession>Q9BTX2</accession>
<accession>Q9NTB6</accession>
<accession>Q9NVM5</accession>
<dbReference type="EMBL" id="AK001492">
    <property type="protein sequence ID" value="BAA91721.1"/>
    <property type="molecule type" value="mRNA"/>
</dbReference>
<dbReference type="EMBL" id="AK001499">
    <property type="protein sequence ID" value="BAA91725.1"/>
    <property type="molecule type" value="mRNA"/>
</dbReference>
<dbReference type="EMBL" id="AK297948">
    <property type="protein sequence ID" value="BAG60263.1"/>
    <property type="molecule type" value="mRNA"/>
</dbReference>
<dbReference type="EMBL" id="AC024093">
    <property type="status" value="NOT_ANNOTATED_CDS"/>
    <property type="molecule type" value="Genomic_DNA"/>
</dbReference>
<dbReference type="EMBL" id="BC003081">
    <property type="protein sequence ID" value="AAH03081.1"/>
    <property type="molecule type" value="mRNA"/>
</dbReference>
<dbReference type="EMBL" id="BC008368">
    <property type="protein sequence ID" value="AAH08368.1"/>
    <property type="molecule type" value="mRNA"/>
</dbReference>
<dbReference type="EMBL" id="AY211927">
    <property type="protein sequence ID" value="AAO65180.1"/>
    <property type="status" value="ALT_FRAME"/>
    <property type="molecule type" value="mRNA"/>
</dbReference>
<dbReference type="EMBL" id="AL137401">
    <property type="protein sequence ID" value="CAB70726.1"/>
    <property type="molecule type" value="mRNA"/>
</dbReference>
<dbReference type="CCDS" id="CCDS8708.1">
    <molecule id="Q9NVM9-1"/>
</dbReference>
<dbReference type="PIR" id="T46457">
    <property type="entry name" value="T46457"/>
</dbReference>
<dbReference type="RefSeq" id="NP_060634.2">
    <molecule id="Q9NVM9-1"/>
    <property type="nucleotide sequence ID" value="NM_018164.3"/>
</dbReference>
<dbReference type="RefSeq" id="XP_016875121.1">
    <molecule id="Q9NVM9-1"/>
    <property type="nucleotide sequence ID" value="XM_017019632.2"/>
</dbReference>
<dbReference type="RefSeq" id="XP_054228513.1">
    <molecule id="Q9NVM9-1"/>
    <property type="nucleotide sequence ID" value="XM_054372538.1"/>
</dbReference>
<dbReference type="PDB" id="6SN1">
    <property type="method" value="X-ray"/>
    <property type="resolution" value="2.54 A"/>
    <property type="chains" value="A=1-706"/>
</dbReference>
<dbReference type="PDB" id="8PK5">
    <property type="method" value="X-ray"/>
    <property type="resolution" value="2.50 A"/>
    <property type="chains" value="A=1-706"/>
</dbReference>
<dbReference type="PDB" id="8PK6">
    <property type="method" value="X-ray"/>
    <property type="resolution" value="3.21 A"/>
    <property type="chains" value="A/C/E=1-256"/>
</dbReference>
<dbReference type="PDB" id="8RBX">
    <property type="method" value="EM"/>
    <property type="resolution" value="4.10 A"/>
    <property type="chains" value="m=1-706"/>
</dbReference>
<dbReference type="PDB" id="8RBZ">
    <property type="method" value="EM"/>
    <property type="resolution" value="3.70 A"/>
    <property type="chains" value="m=1-706"/>
</dbReference>
<dbReference type="PDB" id="8RC4">
    <property type="method" value="EM"/>
    <property type="resolution" value="3.10 A"/>
    <property type="chains" value="m=1-706"/>
</dbReference>
<dbReference type="PDB" id="9EOC">
    <property type="method" value="EM"/>
    <property type="resolution" value="3.30 A"/>
    <property type="chains" value="A=1-706"/>
</dbReference>
<dbReference type="PDB" id="9EP1">
    <property type="method" value="EM"/>
    <property type="resolution" value="4.00 A"/>
    <property type="chains" value="A=1-564"/>
</dbReference>
<dbReference type="PDB" id="9FA4">
    <property type="method" value="EM"/>
    <property type="resolution" value="4.00 A"/>
    <property type="chains" value="A=1-706"/>
</dbReference>
<dbReference type="PDB" id="9FA7">
    <property type="method" value="EM"/>
    <property type="resolution" value="4.00 A"/>
    <property type="chains" value="A=1-706"/>
</dbReference>
<dbReference type="PDBsum" id="6SN1"/>
<dbReference type="PDBsum" id="8PK5"/>
<dbReference type="PDBsum" id="8PK6"/>
<dbReference type="PDBsum" id="8RBX"/>
<dbReference type="PDBsum" id="8RBZ"/>
<dbReference type="PDBsum" id="8RC4"/>
<dbReference type="PDBsum" id="9EOC"/>
<dbReference type="PDBsum" id="9EP1"/>
<dbReference type="PDBsum" id="9FA4"/>
<dbReference type="PDBsum" id="9FA7"/>
<dbReference type="EMDB" id="EMD-19038"/>
<dbReference type="EMDB" id="EMD-19040"/>
<dbReference type="EMDB" id="EMD-19047"/>
<dbReference type="EMDB" id="EMD-19851"/>
<dbReference type="EMDB" id="EMD-19871"/>
<dbReference type="EMDB" id="EMD-50267"/>
<dbReference type="EMDB" id="EMD-50268"/>
<dbReference type="SMR" id="Q9NVM9"/>
<dbReference type="BioGRID" id="120846">
    <property type="interactions" value="65"/>
</dbReference>
<dbReference type="ComplexPortal" id="CPX-6441">
    <property type="entry name" value="Integrator complex"/>
</dbReference>
<dbReference type="FunCoup" id="Q9NVM9">
    <property type="interactions" value="4567"/>
</dbReference>
<dbReference type="IntAct" id="Q9NVM9">
    <property type="interactions" value="37"/>
</dbReference>
<dbReference type="MINT" id="Q9NVM9"/>
<dbReference type="STRING" id="9606.ENSP00000261191"/>
<dbReference type="GlyGen" id="Q9NVM9">
    <property type="glycosylation" value="1 site, 1 O-linked glycan (1 site)"/>
</dbReference>
<dbReference type="iPTMnet" id="Q9NVM9"/>
<dbReference type="MetOSite" id="Q9NVM9"/>
<dbReference type="PhosphoSitePlus" id="Q9NVM9"/>
<dbReference type="SwissPalm" id="Q9NVM9"/>
<dbReference type="BioMuta" id="INTS13"/>
<dbReference type="DMDM" id="71153010"/>
<dbReference type="jPOST" id="Q9NVM9"/>
<dbReference type="MassIVE" id="Q9NVM9"/>
<dbReference type="PaxDb" id="9606-ENSP00000261191"/>
<dbReference type="PeptideAtlas" id="Q9NVM9"/>
<dbReference type="ProteomicsDB" id="4703"/>
<dbReference type="ProteomicsDB" id="82831">
    <molecule id="Q9NVM9-1"/>
</dbReference>
<dbReference type="Pumba" id="Q9NVM9"/>
<dbReference type="Antibodypedia" id="42367">
    <property type="antibodies" value="67 antibodies from 20 providers"/>
</dbReference>
<dbReference type="DNASU" id="55726"/>
<dbReference type="Ensembl" id="ENST00000261191.12">
    <molecule id="Q9NVM9-1"/>
    <property type="protein sequence ID" value="ENSP00000261191.7"/>
    <property type="gene ID" value="ENSG00000064102.15"/>
</dbReference>
<dbReference type="GeneID" id="55726"/>
<dbReference type="KEGG" id="hsa:55726"/>
<dbReference type="MANE-Select" id="ENST00000261191.12">
    <property type="protein sequence ID" value="ENSP00000261191.7"/>
    <property type="RefSeq nucleotide sequence ID" value="NM_018164.3"/>
    <property type="RefSeq protein sequence ID" value="NP_060634.2"/>
</dbReference>
<dbReference type="UCSC" id="uc001rhk.5">
    <molecule id="Q9NVM9-1"/>
    <property type="organism name" value="human"/>
</dbReference>
<dbReference type="AGR" id="HGNC:20174"/>
<dbReference type="CTD" id="55726"/>
<dbReference type="DisGeNET" id="55726"/>
<dbReference type="GeneCards" id="INTS13"/>
<dbReference type="HGNC" id="HGNC:20174">
    <property type="gene designation" value="INTS13"/>
</dbReference>
<dbReference type="HPA" id="ENSG00000064102">
    <property type="expression patterns" value="Low tissue specificity"/>
</dbReference>
<dbReference type="MIM" id="615079">
    <property type="type" value="gene"/>
</dbReference>
<dbReference type="neXtProt" id="NX_Q9NVM9"/>
<dbReference type="OpenTargets" id="ENSG00000064102"/>
<dbReference type="PharmGKB" id="PA134892469"/>
<dbReference type="VEuPathDB" id="HostDB:ENSG00000064102"/>
<dbReference type="eggNOG" id="KOG3711">
    <property type="taxonomic scope" value="Eukaryota"/>
</dbReference>
<dbReference type="GeneTree" id="ENSGT00390000002793"/>
<dbReference type="HOGENOM" id="CLU_012654_1_0_1"/>
<dbReference type="InParanoid" id="Q9NVM9"/>
<dbReference type="OMA" id="NCTAMHR"/>
<dbReference type="OrthoDB" id="5844105at2759"/>
<dbReference type="PAN-GO" id="Q9NVM9">
    <property type="GO annotations" value="3 GO annotations based on evolutionary models"/>
</dbReference>
<dbReference type="PhylomeDB" id="Q9NVM9"/>
<dbReference type="TreeFam" id="TF105815"/>
<dbReference type="PathwayCommons" id="Q9NVM9"/>
<dbReference type="Reactome" id="R-HSA-6807505">
    <property type="pathway name" value="RNA polymerase II transcribes snRNA genes"/>
</dbReference>
<dbReference type="SignaLink" id="Q9NVM9"/>
<dbReference type="SIGNOR" id="Q9NVM9"/>
<dbReference type="BioGRID-ORCS" id="55726">
    <property type="hits" value="341 hits in 1157 CRISPR screens"/>
</dbReference>
<dbReference type="ChiTaRS" id="ASUN">
    <property type="organism name" value="human"/>
</dbReference>
<dbReference type="GeneWiki" id="C12orf11"/>
<dbReference type="GenomeRNAi" id="55726"/>
<dbReference type="Pharos" id="Q9NVM9">
    <property type="development level" value="Tbio"/>
</dbReference>
<dbReference type="PRO" id="PR:Q9NVM9"/>
<dbReference type="Proteomes" id="UP000005640">
    <property type="component" value="Chromosome 12"/>
</dbReference>
<dbReference type="RNAct" id="Q9NVM9">
    <property type="molecule type" value="protein"/>
</dbReference>
<dbReference type="Bgee" id="ENSG00000064102">
    <property type="expression patterns" value="Expressed in esophagus squamous epithelium and 203 other cell types or tissues"/>
</dbReference>
<dbReference type="ExpressionAtlas" id="Q9NVM9">
    <property type="expression patterns" value="baseline and differential"/>
</dbReference>
<dbReference type="GO" id="GO:0005737">
    <property type="term" value="C:cytoplasm"/>
    <property type="evidence" value="ECO:0000314"/>
    <property type="project" value="UniProtKB"/>
</dbReference>
<dbReference type="GO" id="GO:0160232">
    <property type="term" value="C:INTAC complex"/>
    <property type="evidence" value="ECO:0000314"/>
    <property type="project" value="UniProtKB"/>
</dbReference>
<dbReference type="GO" id="GO:0032039">
    <property type="term" value="C:integrator complex"/>
    <property type="evidence" value="ECO:0000314"/>
    <property type="project" value="UniProtKB"/>
</dbReference>
<dbReference type="GO" id="GO:0043231">
    <property type="term" value="C:intracellular membrane-bounded organelle"/>
    <property type="evidence" value="ECO:0000314"/>
    <property type="project" value="HPA"/>
</dbReference>
<dbReference type="GO" id="GO:0016604">
    <property type="term" value="C:nuclear body"/>
    <property type="evidence" value="ECO:0000314"/>
    <property type="project" value="HPA"/>
</dbReference>
<dbReference type="GO" id="GO:0005654">
    <property type="term" value="C:nucleoplasm"/>
    <property type="evidence" value="ECO:0000314"/>
    <property type="project" value="HPA"/>
</dbReference>
<dbReference type="GO" id="GO:0005634">
    <property type="term" value="C:nucleus"/>
    <property type="evidence" value="ECO:0000314"/>
    <property type="project" value="UniProtKB"/>
</dbReference>
<dbReference type="GO" id="GO:0140297">
    <property type="term" value="F:DNA-binding transcription factor binding"/>
    <property type="evidence" value="ECO:0000314"/>
    <property type="project" value="UniProtKB"/>
</dbReference>
<dbReference type="GO" id="GO:0051301">
    <property type="term" value="P:cell division"/>
    <property type="evidence" value="ECO:0007669"/>
    <property type="project" value="UniProtKB-KW"/>
</dbReference>
<dbReference type="GO" id="GO:0051642">
    <property type="term" value="P:centrosome localization"/>
    <property type="evidence" value="ECO:0000315"/>
    <property type="project" value="MGI"/>
</dbReference>
<dbReference type="GO" id="GO:0030317">
    <property type="term" value="P:flagellated sperm motility"/>
    <property type="evidence" value="ECO:0000250"/>
    <property type="project" value="UniProtKB"/>
</dbReference>
<dbReference type="GO" id="GO:0007052">
    <property type="term" value="P:mitotic spindle organization"/>
    <property type="evidence" value="ECO:0000315"/>
    <property type="project" value="MGI"/>
</dbReference>
<dbReference type="GO" id="GO:0090435">
    <property type="term" value="P:protein localization to nuclear envelope"/>
    <property type="evidence" value="ECO:0000315"/>
    <property type="project" value="MGI"/>
</dbReference>
<dbReference type="GO" id="GO:0080154">
    <property type="term" value="P:regulation of fertilization"/>
    <property type="evidence" value="ECO:0000250"/>
    <property type="project" value="UniProtKB"/>
</dbReference>
<dbReference type="GO" id="GO:0007346">
    <property type="term" value="P:regulation of mitotic cell cycle"/>
    <property type="evidence" value="ECO:0000315"/>
    <property type="project" value="UniProtKB"/>
</dbReference>
<dbReference type="GO" id="GO:0034243">
    <property type="term" value="P:regulation of transcription elongation by RNA polymerase II"/>
    <property type="evidence" value="ECO:0000303"/>
    <property type="project" value="ComplexPortal"/>
</dbReference>
<dbReference type="GO" id="GO:0160240">
    <property type="term" value="P:RNA polymerase II transcription initiation surveillance"/>
    <property type="evidence" value="ECO:0000314"/>
    <property type="project" value="UniProtKB"/>
</dbReference>
<dbReference type="GO" id="GO:0016180">
    <property type="term" value="P:snRNA processing"/>
    <property type="evidence" value="ECO:0000315"/>
    <property type="project" value="UniProtKB"/>
</dbReference>
<dbReference type="InterPro" id="IPR019355">
    <property type="entry name" value="Cell_cycle_regulator_Mat89Bb"/>
</dbReference>
<dbReference type="PANTHER" id="PTHR12955:SF1">
    <property type="entry name" value="INTEGRATOR COMPLEX SUBUNIT 13"/>
    <property type="match status" value="1"/>
</dbReference>
<dbReference type="PANTHER" id="PTHR12955">
    <property type="entry name" value="SARCOMA ANTIGEN NY-SAR-95-RELATED"/>
    <property type="match status" value="1"/>
</dbReference>
<dbReference type="Pfam" id="PF10221">
    <property type="entry name" value="Mat89Bb"/>
    <property type="match status" value="1"/>
</dbReference>
<keyword id="KW-0002">3D-structure</keyword>
<keyword id="KW-0025">Alternative splicing</keyword>
<keyword id="KW-0131">Cell cycle</keyword>
<keyword id="KW-0132">Cell division</keyword>
<keyword id="KW-0175">Coiled coil</keyword>
<keyword id="KW-0963">Cytoplasm</keyword>
<keyword id="KW-1017">Isopeptide bond</keyword>
<keyword id="KW-0498">Mitosis</keyword>
<keyword id="KW-0539">Nucleus</keyword>
<keyword id="KW-0597">Phosphoprotein</keyword>
<keyword id="KW-1267">Proteomics identification</keyword>
<keyword id="KW-1185">Reference proteome</keyword>
<keyword id="KW-0832">Ubl conjugation</keyword>
<comment type="function">
    <text evidence="6 7 8 9 10 11">Component of the integrator complex, a multiprotein complex that terminates RNA polymerase II (Pol II) transcription in the promoter-proximal region of genes (PubMed:38570683, PubMed:38823386). The integrator complex provides a quality checkpoint during transcription elongation by driving premature transcription termination of transcripts that are unfavorably configured for transcriptional elongation: the complex terminates transcription by (1) catalyzing dephosphorylation of the C-terminal domain (CTD) of Pol II subunit POLR2A/RPB1 and SUPT5H/SPT5, (2) degrading the exiting nascent RNA transcript via endonuclease activity and (3) promoting the release of Pol II from bound DNA (PubMed:38570683). The integrator complex is also involved in terminating the synthesis of non-coding Pol II transcripts, such as enhancer RNAs (eRNAs), small nuclear RNAs (snRNAs), telomerase RNAs and long non-coding RNAs (lncRNAs) (PubMed:32647223). Within the integrator complex, INTS13 is part of the integrator tail module and acts as a platform for the recruitment of transcription factors at promoters (PubMed:38823386, PubMed:38906142). At prophase, mediates recruitment of cytoplasmic dynein to the nuclear envelope, a step important for proper centrosome-nucleus coupling (PubMed:23097494, PubMed:23904267). At G2/M phase, may be required for proper spindle formation and execution of cytokinesis (PubMed:23097494, PubMed:23904267).</text>
</comment>
<comment type="subunit">
    <text evidence="6 7 8 9 10 11 12">Component of the Integrator complex, composed of core subunits INTS1, INTS2, INTS3, INTS4, INTS5, INTS6, INTS7, INTS8, INTS9/RC74, INTS10, INTS11/CPSF3L, INTS12, INTS13, INTS14 and INTS15 (PubMed:23904267, PubMed:32647223, PubMed:38570683, PubMed:38823386, PubMed:38906142, PubMed:39032490). The core complex associates with protein phosphatase 2A subunits PPP2CA and PPP2R1A, to form the Integrator-PP2A (INTAC) complex (PubMed:38570683). INTS13 is part of the tail subcomplex, composed of INTS10, INTS13, INTS14 and INTS15 (PubMed:32647223, PubMed:38823386, PubMed:38906142). Interacts with transcription factors ZNF609 and ZNF655 (PubMed:38823386, PubMed:38906142). Interacts with PAFAH1B1; this interaction may be required for proper recruitment of dynein complexes to the nuclear envelope at prophase (PubMed:23097494).</text>
</comment>
<comment type="interaction">
    <interactant intactId="EBI-741429">
        <id>Q9NVM9</id>
    </interactant>
    <interactant intactId="EBI-718750">
        <id>Q13951</id>
        <label>CBFB</label>
    </interactant>
    <organismsDiffer>false</organismsDiffer>
    <experiments>2</experiments>
</comment>
<comment type="interaction">
    <interactant intactId="EBI-741429">
        <id>Q9NVM9</id>
    </interactant>
    <interactant intactId="EBI-4409724">
        <id>Q96SY0</id>
        <label>INTS14</label>
    </interactant>
    <organismsDiffer>false</organismsDiffer>
    <experiments>16</experiments>
</comment>
<comment type="subcellular location">
    <subcellularLocation>
        <location evidence="7 12">Nucleus</location>
    </subcellularLocation>
    <subcellularLocation>
        <location evidence="6 7">Cytoplasm</location>
    </subcellularLocation>
    <text evidence="5">Nuclear location is required for recruitment of dynein motors to nuclear envelope at G2/M.</text>
</comment>
<comment type="alternative products">
    <event type="alternative splicing"/>
    <isoform>
        <id>Q9NVM9-1</id>
        <name>1</name>
        <sequence type="displayed"/>
    </isoform>
    <isoform>
        <id>Q9NVM9-2</id>
        <name>2</name>
        <sequence type="described" ref="VSP_056514"/>
    </isoform>
</comment>
<comment type="tissue specificity">
    <text evidence="3">Widely expressed. Tends to be up-regulated in seminomas compared to normal testis.</text>
</comment>
<comment type="domain">
    <text evidence="11">The cleavage module binding motif (CMBM) mediates recruitment of transcription factors.</text>
</comment>
<comment type="similarity">
    <text evidence="17">Belongs to the Integrator subunit 13 family.</text>
</comment>
<comment type="sequence caution" evidence="17">
    <conflict type="frameshift">
        <sequence resource="EMBL-CDS" id="AAO65180"/>
    </conflict>
</comment>
<protein>
    <recommendedName>
        <fullName evidence="18">Integrator complex subunit 13</fullName>
    </recommendedName>
    <alternativeName>
        <fullName>Cell cycle regulator Mat89Bb homolog</fullName>
    </alternativeName>
    <alternativeName>
        <fullName>Germ cell tumor 1</fullName>
    </alternativeName>
    <alternativeName>
        <fullName evidence="14 15">Protein asunder homolog</fullName>
    </alternativeName>
    <alternativeName>
        <fullName>Sarcoma antigen NY-SAR-95</fullName>
    </alternativeName>
</protein>
<evidence type="ECO:0000255" key="1"/>
<evidence type="ECO:0000256" key="2">
    <source>
        <dbReference type="SAM" id="MobiDB-lite"/>
    </source>
</evidence>
<evidence type="ECO:0000269" key="3">
    <source>
    </source>
</evidence>
<evidence type="ECO:0000269" key="4">
    <source>
    </source>
</evidence>
<evidence type="ECO:0000269" key="5">
    <source>
    </source>
</evidence>
<evidence type="ECO:0000269" key="6">
    <source>
    </source>
</evidence>
<evidence type="ECO:0000269" key="7">
    <source>
    </source>
</evidence>
<evidence type="ECO:0000269" key="8">
    <source>
    </source>
</evidence>
<evidence type="ECO:0000269" key="9">
    <source>
    </source>
</evidence>
<evidence type="ECO:0000269" key="10">
    <source>
    </source>
</evidence>
<evidence type="ECO:0000269" key="11">
    <source>
    </source>
</evidence>
<evidence type="ECO:0000269" key="12">
    <source>
    </source>
</evidence>
<evidence type="ECO:0000303" key="13">
    <source>
    </source>
</evidence>
<evidence type="ECO:0000303" key="14">
    <source>
    </source>
</evidence>
<evidence type="ECO:0000303" key="15">
    <source>
    </source>
</evidence>
<evidence type="ECO:0000303" key="16">
    <source>
    </source>
</evidence>
<evidence type="ECO:0000305" key="17"/>
<evidence type="ECO:0000312" key="18">
    <source>
        <dbReference type="HGNC" id="HGNC:20174"/>
    </source>
</evidence>
<evidence type="ECO:0007744" key="19">
    <source>
        <dbReference type="PDB" id="6SN1"/>
    </source>
</evidence>
<evidence type="ECO:0007744" key="20">
    <source>
        <dbReference type="PDB" id="8PK5"/>
    </source>
</evidence>
<evidence type="ECO:0007744" key="21">
    <source>
        <dbReference type="PDB" id="8PK6"/>
    </source>
</evidence>
<evidence type="ECO:0007744" key="22">
    <source>
        <dbReference type="PDB" id="8RBX"/>
    </source>
</evidence>
<evidence type="ECO:0007744" key="23">
    <source>
        <dbReference type="PDB" id="8RBZ"/>
    </source>
</evidence>
<evidence type="ECO:0007744" key="24">
    <source>
        <dbReference type="PDB" id="8RC4"/>
    </source>
</evidence>
<evidence type="ECO:0007744" key="25">
    <source>
        <dbReference type="PDB" id="9EOC"/>
    </source>
</evidence>
<evidence type="ECO:0007744" key="26">
    <source>
        <dbReference type="PDB" id="9EP1"/>
    </source>
</evidence>
<evidence type="ECO:0007744" key="27">
    <source>
        <dbReference type="PDB" id="9FA4"/>
    </source>
</evidence>
<evidence type="ECO:0007744" key="28">
    <source>
        <dbReference type="PDB" id="9FA7"/>
    </source>
</evidence>
<evidence type="ECO:0007744" key="29">
    <source>
    </source>
</evidence>
<evidence type="ECO:0007744" key="30">
    <source>
    </source>
</evidence>
<evidence type="ECO:0007744" key="31">
    <source>
    </source>
</evidence>
<evidence type="ECO:0007744" key="32">
    <source>
    </source>
</evidence>
<evidence type="ECO:0007744" key="33">
    <source>
    </source>
</evidence>
<evidence type="ECO:0007744" key="34">
    <source>
    </source>
</evidence>
<evidence type="ECO:0007829" key="35">
    <source>
        <dbReference type="PDB" id="6SN1"/>
    </source>
</evidence>
<evidence type="ECO:0007829" key="36">
    <source>
        <dbReference type="PDB" id="8PK5"/>
    </source>
</evidence>
<evidence type="ECO:0007829" key="37">
    <source>
        <dbReference type="PDB" id="8RC4"/>
    </source>
</evidence>
<evidence type="ECO:0007829" key="38">
    <source>
        <dbReference type="PDB" id="9EOC"/>
    </source>
</evidence>